<reference key="1">
    <citation type="submission" date="1996-07" db="EMBL/GenBank/DDBJ databases">
        <authorList>
            <person name="Marra M."/>
            <person name="Hillier L."/>
            <person name="Allen M."/>
            <person name="Bowles M."/>
            <person name="Dietrich N."/>
            <person name="Dubuque T."/>
            <person name="Geisel S."/>
            <person name="Kucaba T."/>
            <person name="Lacy M."/>
            <person name="Le M."/>
            <person name="Martin J."/>
            <person name="Morris M."/>
            <person name="Schellenberg K."/>
            <person name="Steptoe M."/>
            <person name="Tan F."/>
            <person name="Underwood K."/>
            <person name="Moore B."/>
            <person name="Theising B."/>
            <person name="Wylie T."/>
            <person name="Lennon G."/>
            <person name="Soares B."/>
            <person name="Wilson R."/>
            <person name="Waterston R."/>
        </authorList>
    </citation>
    <scope>NUCLEOTIDE SEQUENCE [MRNA]</scope>
</reference>
<reference key="2">
    <citation type="journal article" date="1998" name="Biochim. Biophys. Acta">
        <title>Clustered organization of S100 genes in human and mouse.</title>
        <authorList>
            <person name="Ridinger K."/>
            <person name="Ilg E.C."/>
            <person name="Niggli F.K."/>
            <person name="Heizmann C.W."/>
            <person name="Schaefer B.W."/>
        </authorList>
    </citation>
    <scope>NUCLEOTIDE SEQUENCE [MRNA]</scope>
</reference>
<reference key="3">
    <citation type="journal article" date="1988" name="Eur. J. Biochem.">
        <title>S100a0 (alpha alpha) protein in cardiac muscle. Isolation from human cardiac muscle and ultrastructural localization.</title>
        <authorList>
            <person name="Haimoto H."/>
            <person name="Kato K."/>
        </authorList>
    </citation>
    <scope>TISSUE SPECIFICITY</scope>
    <scope>SUBCELLULAR LOCATION</scope>
</reference>
<reference key="4">
    <citation type="journal article" date="2002" name="Mol. Cell. Biol.">
        <title>Impaired cardiac contractility response to hemodynamic stress in S100A1-deficient mice.</title>
        <authorList>
            <person name="Du X.J."/>
            <person name="Cole T.J."/>
            <person name="Tenis N."/>
            <person name="Gao X.M."/>
            <person name="Koentgen F."/>
            <person name="Kemp B.E."/>
            <person name="Heierhorst J."/>
        </authorList>
    </citation>
    <scope>FUNCTION</scope>
    <scope>DISRUPTION PHENOTYPE</scope>
</reference>
<reference key="5">
    <citation type="journal article" date="2006" name="Circulation">
        <title>Cardiac S100A1 protein levels determine contractile performance and propensity toward heart failure after myocardial infarction.</title>
        <authorList>
            <person name="Most P."/>
            <person name="Seifert H."/>
            <person name="Gao E."/>
            <person name="Funakoshi H."/>
            <person name="Voelkers M."/>
            <person name="Heierhorst J."/>
            <person name="Remppis A."/>
            <person name="Pleger S.T."/>
            <person name="DeGeorge B.R. Jr."/>
            <person name="Eckhart A.D."/>
            <person name="Feldman A.M."/>
            <person name="Koch W.J."/>
        </authorList>
    </citation>
    <scope>FUNCTION</scope>
    <scope>DISRUPTION PHENOTYPE</scope>
</reference>
<reference key="6">
    <citation type="journal article" date="2007" name="Mol. Cell. Biol.">
        <title>Ca2+ -dependent interaction of S100A1 with F1-ATPase leads to an increased ATP content in cardiomyocytes.</title>
        <authorList>
            <person name="Boerries M."/>
            <person name="Most P."/>
            <person name="Gledhill J.R."/>
            <person name="Walker J.E."/>
            <person name="Katus H.A."/>
            <person name="Koch W.J."/>
            <person name="Aebi U."/>
            <person name="Schoenenberger C.A."/>
        </authorList>
    </citation>
    <scope>FUNCTION</scope>
    <scope>SUBCELLULAR LOCATION</scope>
    <scope>INTERACTION WITH ATP5F1A AND ATP5F1B</scope>
</reference>
<reference key="7">
    <citation type="journal article" date="2010" name="Cell">
        <title>A tissue-specific atlas of mouse protein phosphorylation and expression.</title>
        <authorList>
            <person name="Huttlin E.L."/>
            <person name="Jedrychowski M.P."/>
            <person name="Elias J.E."/>
            <person name="Goswami T."/>
            <person name="Rad R."/>
            <person name="Beausoleil S.A."/>
            <person name="Villen J."/>
            <person name="Haas W."/>
            <person name="Sowa M.E."/>
            <person name="Gygi S.P."/>
        </authorList>
    </citation>
    <scope>IDENTIFICATION BY MASS SPECTROMETRY [LARGE SCALE ANALYSIS]</scope>
    <source>
        <tissue>Brain</tissue>
        <tissue>Brown adipose tissue</tissue>
        <tissue>Heart</tissue>
        <tissue>Kidney</tissue>
        <tissue>Liver</tissue>
        <tissue>Lung</tissue>
        <tissue>Pancreas</tissue>
        <tissue>Testis</tissue>
    </source>
</reference>
<dbReference type="EMBL" id="AA000715">
    <property type="status" value="NOT_ANNOTATED_CDS"/>
    <property type="molecule type" value="mRNA"/>
</dbReference>
<dbReference type="EMBL" id="AA207749">
    <property type="status" value="NOT_ANNOTATED_CDS"/>
    <property type="molecule type" value="mRNA"/>
</dbReference>
<dbReference type="EMBL" id="AA500563">
    <property type="status" value="NOT_ANNOTATED_CDS"/>
    <property type="molecule type" value="mRNA"/>
</dbReference>
<dbReference type="EMBL" id="AA432539">
    <property type="status" value="NOT_ANNOTATED_CDS"/>
    <property type="molecule type" value="mRNA"/>
</dbReference>
<dbReference type="EMBL" id="AF087687">
    <property type="protein sequence ID" value="AAC64108.1"/>
    <property type="molecule type" value="mRNA"/>
</dbReference>
<dbReference type="CCDS" id="CCDS38503.1"/>
<dbReference type="RefSeq" id="NP_035439.1">
    <property type="nucleotide sequence ID" value="NM_011309.3"/>
</dbReference>
<dbReference type="PDB" id="8VK3">
    <property type="method" value="EM"/>
    <property type="resolution" value="3.21 A"/>
    <property type="chains" value="I/J/K/L/M/N/O/P=1-94"/>
</dbReference>
<dbReference type="PDB" id="8VK4">
    <property type="method" value="EM"/>
    <property type="resolution" value="3.56 A"/>
    <property type="chains" value="I/J/K/L/M/N/O/P=1-94"/>
</dbReference>
<dbReference type="PDBsum" id="8VK3"/>
<dbReference type="PDBsum" id="8VK4"/>
<dbReference type="SMR" id="P56565"/>
<dbReference type="BioGRID" id="203048">
    <property type="interactions" value="4"/>
</dbReference>
<dbReference type="FunCoup" id="P56565">
    <property type="interactions" value="65"/>
</dbReference>
<dbReference type="IntAct" id="P56565">
    <property type="interactions" value="1"/>
</dbReference>
<dbReference type="STRING" id="10090.ENSMUSP00000058237"/>
<dbReference type="iPTMnet" id="P56565"/>
<dbReference type="PhosphoSitePlus" id="P56565"/>
<dbReference type="jPOST" id="P56565"/>
<dbReference type="PaxDb" id="10090-ENSMUSP00000058237"/>
<dbReference type="PeptideAtlas" id="P56565"/>
<dbReference type="ProteomicsDB" id="256857"/>
<dbReference type="TopDownProteomics" id="P56565"/>
<dbReference type="DNASU" id="20193"/>
<dbReference type="GeneID" id="20193"/>
<dbReference type="KEGG" id="mmu:20193"/>
<dbReference type="AGR" id="MGI:1338917"/>
<dbReference type="CTD" id="6271"/>
<dbReference type="MGI" id="MGI:1338917">
    <property type="gene designation" value="S100a1"/>
</dbReference>
<dbReference type="eggNOG" id="ENOG502SSF0">
    <property type="taxonomic scope" value="Eukaryota"/>
</dbReference>
<dbReference type="InParanoid" id="P56565"/>
<dbReference type="OrthoDB" id="26525at2759"/>
<dbReference type="PhylomeDB" id="P56565"/>
<dbReference type="Reactome" id="R-MMU-5686938">
    <property type="pathway name" value="Regulation of TLR by endogenous ligand"/>
</dbReference>
<dbReference type="BioGRID-ORCS" id="20193">
    <property type="hits" value="4 hits in 76 CRISPR screens"/>
</dbReference>
<dbReference type="ChiTaRS" id="S100a1">
    <property type="organism name" value="mouse"/>
</dbReference>
<dbReference type="PRO" id="PR:P56565"/>
<dbReference type="Proteomes" id="UP000000589">
    <property type="component" value="Unplaced"/>
</dbReference>
<dbReference type="RNAct" id="P56565">
    <property type="molecule type" value="protein"/>
</dbReference>
<dbReference type="GO" id="GO:0005739">
    <property type="term" value="C:mitochondrion"/>
    <property type="evidence" value="ECO:0007669"/>
    <property type="project" value="UniProtKB-SubCell"/>
</dbReference>
<dbReference type="GO" id="GO:0016529">
    <property type="term" value="C:sarcoplasmic reticulum"/>
    <property type="evidence" value="ECO:0000314"/>
    <property type="project" value="MGI"/>
</dbReference>
<dbReference type="GO" id="GO:0005509">
    <property type="term" value="F:calcium ion binding"/>
    <property type="evidence" value="ECO:0007669"/>
    <property type="project" value="InterPro"/>
</dbReference>
<dbReference type="GO" id="GO:0008016">
    <property type="term" value="P:regulation of heart contraction"/>
    <property type="evidence" value="ECO:0007669"/>
    <property type="project" value="InterPro"/>
</dbReference>
<dbReference type="CDD" id="cd05025">
    <property type="entry name" value="S-100A1"/>
    <property type="match status" value="1"/>
</dbReference>
<dbReference type="FunFam" id="1.10.238.10:FF:000044">
    <property type="entry name" value="Protein S100"/>
    <property type="match status" value="1"/>
</dbReference>
<dbReference type="Gene3D" id="1.10.238.10">
    <property type="entry name" value="EF-hand"/>
    <property type="match status" value="1"/>
</dbReference>
<dbReference type="InterPro" id="IPR011992">
    <property type="entry name" value="EF-hand-dom_pair"/>
</dbReference>
<dbReference type="InterPro" id="IPR018247">
    <property type="entry name" value="EF_Hand_1_Ca_BS"/>
</dbReference>
<dbReference type="InterPro" id="IPR002048">
    <property type="entry name" value="EF_hand_dom"/>
</dbReference>
<dbReference type="InterPro" id="IPR028486">
    <property type="entry name" value="S100-A1"/>
</dbReference>
<dbReference type="InterPro" id="IPR001751">
    <property type="entry name" value="S100/CaBP7/8-like_CS"/>
</dbReference>
<dbReference type="InterPro" id="IPR013787">
    <property type="entry name" value="S100_Ca-bd_sub"/>
</dbReference>
<dbReference type="PANTHER" id="PTHR11639:SF134">
    <property type="entry name" value="PROTEIN S100-A1-RELATED"/>
    <property type="match status" value="1"/>
</dbReference>
<dbReference type="PANTHER" id="PTHR11639">
    <property type="entry name" value="S100 CALCIUM-BINDING PROTEIN"/>
    <property type="match status" value="1"/>
</dbReference>
<dbReference type="Pfam" id="PF00036">
    <property type="entry name" value="EF-hand_1"/>
    <property type="match status" value="1"/>
</dbReference>
<dbReference type="Pfam" id="PF01023">
    <property type="entry name" value="S_100"/>
    <property type="match status" value="1"/>
</dbReference>
<dbReference type="SMART" id="SM00054">
    <property type="entry name" value="EFh"/>
    <property type="match status" value="1"/>
</dbReference>
<dbReference type="SMART" id="SM01394">
    <property type="entry name" value="S_100"/>
    <property type="match status" value="1"/>
</dbReference>
<dbReference type="SUPFAM" id="SSF47473">
    <property type="entry name" value="EF-hand"/>
    <property type="match status" value="1"/>
</dbReference>
<dbReference type="PROSITE" id="PS00018">
    <property type="entry name" value="EF_HAND_1"/>
    <property type="match status" value="1"/>
</dbReference>
<dbReference type="PROSITE" id="PS50222">
    <property type="entry name" value="EF_HAND_2"/>
    <property type="match status" value="1"/>
</dbReference>
<dbReference type="PROSITE" id="PS00303">
    <property type="entry name" value="S100_CABP"/>
    <property type="match status" value="1"/>
</dbReference>
<sequence length="94" mass="10505">MGSELESAMETLINVFHAHSGQEGDKYKLSKKELKDLLQTELSGFLDVQKDADAVDKVMKELDENGDGEVDFKEYVVLVAALTVACNNFFWETS</sequence>
<comment type="function">
    <text evidence="2 5 6 7">Small calcium binding protein that plays important roles in several biological processes such as Ca(2+) homeostasis, chondrocyte biology and cardiomyocyte regulation (PubMed:11909974, PubMed:16952982). In response to an increase in intracellular Ca(2+) levels, binds calcium which triggers conformational changes. These changes allow interactions with specific target proteins and modulate their activity. Regulates a network in cardiomyocytes controlling sarcoplasmic reticulum Ca(2+) cycling and mitochondrial function through interaction with the ryanodine receptors RYR1 and RYR2, sarcoplasmic reticulum Ca(2+)-ATPase/ATP2A2 and mitochondrial F1-ATPase (PubMed:17438143). Facilitates diastolic Ca(2+) dissociation and myofilament mechanics in order to improve relaxation during diastole (By similarity).</text>
</comment>
<comment type="subunit">
    <text evidence="2 3 7">Dimer of either two alpha chains, or two beta chains, or one alpha and one beta chain. Also forms heterodimers with S100P (By similarity). Interacts with AGER (By similarity). Interacts with CAPZA1 (By similarity). Interacts with FKBP4. Interacts with RYR1 and RYR2. Interacts with CACYBP in a calcium-dependent manner. Interacts with PPP5C (via TPR repeats); the interaction is calcium-dependent and modulates PPP5C activity. Interacts with ATP2A2 and PLN in a Ca(2+)-dependent manner (By similarity). Interacts with mitochondrial F1-ATPase subunits ATP5F1A and ATP5F1B; these interactions increase F1-ATPase activity (PubMed:17438143).</text>
</comment>
<comment type="interaction">
    <interactant intactId="EBI-1544186">
        <id>P56565</id>
    </interactant>
    <interactant intactId="EBI-1544173">
        <id>P07091</id>
        <label>S100a4</label>
    </interactant>
    <organismsDiffer>false</organismsDiffer>
    <experiments>6</experiments>
</comment>
<comment type="subcellular location">
    <subcellularLocation>
        <location evidence="2">Cytoplasm</location>
    </subcellularLocation>
    <subcellularLocation>
        <location evidence="8">Sarcoplasmic reticulum</location>
    </subcellularLocation>
    <subcellularLocation>
        <location evidence="7">Mitochondrion</location>
    </subcellularLocation>
</comment>
<comment type="tissue specificity">
    <text evidence="8">Expressed in the cardiac and the skeletal muscles.</text>
</comment>
<comment type="PTM">
    <text evidence="2">Glutathionylated; glutathionylation increases affinity to calcium about 10-fold.</text>
</comment>
<comment type="disruption phenotype">
    <text evidence="5 6">Deficient mice show unaltered baseline cardiac function and heart rate, but display deficiencies in their contractile function in response to beta-adrenergic stimulation and enhanced transsarcolemmal Ca(2+) influx (PubMed:11909974). It also significantly accelerates the development of contractile dysfunction after myocardial infarction, with a rapid onset of cardiac remodeling and a transition to heart failure combined with excessive mortality (PubMed:16952982).</text>
</comment>
<comment type="miscellaneous">
    <text evidence="1">Able to bind zinc in vitro; the binding sites are different from the calcium binding sites. The physiological relevance of zinc binding is unclear. Physiological concentrations of potassium antagonize the binding of both divalent cations, especially affecting the high-affinity calcium-binding sites.</text>
</comment>
<comment type="similarity">
    <text evidence="9">Belongs to the S-100 family.</text>
</comment>
<gene>
    <name type="primary">S100a1</name>
</gene>
<evidence type="ECO:0000250" key="1">
    <source>
        <dbReference type="UniProtKB" id="P02639"/>
    </source>
</evidence>
<evidence type="ECO:0000250" key="2">
    <source>
        <dbReference type="UniProtKB" id="P23297"/>
    </source>
</evidence>
<evidence type="ECO:0000250" key="3">
    <source>
        <dbReference type="UniProtKB" id="P35467"/>
    </source>
</evidence>
<evidence type="ECO:0000255" key="4">
    <source>
        <dbReference type="PROSITE-ProRule" id="PRU00448"/>
    </source>
</evidence>
<evidence type="ECO:0000269" key="5">
    <source>
    </source>
</evidence>
<evidence type="ECO:0000269" key="6">
    <source>
    </source>
</evidence>
<evidence type="ECO:0000269" key="7">
    <source>
    </source>
</evidence>
<evidence type="ECO:0000269" key="8">
    <source>
    </source>
</evidence>
<evidence type="ECO:0000305" key="9"/>
<feature type="chain" id="PRO_0000143962" description="Protein S100-A1">
    <location>
        <begin position="1"/>
        <end position="94"/>
    </location>
</feature>
<feature type="domain" description="EF-hand 1" evidence="9">
    <location>
        <begin position="13"/>
        <end position="48"/>
    </location>
</feature>
<feature type="domain" description="EF-hand 2" evidence="4">
    <location>
        <begin position="50"/>
        <end position="85"/>
    </location>
</feature>
<feature type="binding site" evidence="3">
    <location>
        <position position="28"/>
    </location>
    <ligand>
        <name>Ca(2+)</name>
        <dbReference type="ChEBI" id="CHEBI:29108"/>
        <label>1</label>
        <note>low affinity</note>
    </ligand>
</feature>
<feature type="binding site" evidence="3">
    <location>
        <position position="33"/>
    </location>
    <ligand>
        <name>Ca(2+)</name>
        <dbReference type="ChEBI" id="CHEBI:29108"/>
        <label>1</label>
        <note>low affinity</note>
    </ligand>
</feature>
<feature type="binding site" evidence="4">
    <location>
        <position position="63"/>
    </location>
    <ligand>
        <name>Ca(2+)</name>
        <dbReference type="ChEBI" id="CHEBI:29108"/>
        <label>2</label>
        <note>high affinity</note>
    </ligand>
</feature>
<feature type="binding site" evidence="4">
    <location>
        <position position="65"/>
    </location>
    <ligand>
        <name>Ca(2+)</name>
        <dbReference type="ChEBI" id="CHEBI:29108"/>
        <label>2</label>
        <note>high affinity</note>
    </ligand>
</feature>
<feature type="binding site" evidence="4">
    <location>
        <position position="67"/>
    </location>
    <ligand>
        <name>Ca(2+)</name>
        <dbReference type="ChEBI" id="CHEBI:29108"/>
        <label>2</label>
        <note>high affinity</note>
    </ligand>
</feature>
<feature type="binding site" evidence="4">
    <location>
        <position position="69"/>
    </location>
    <ligand>
        <name>Ca(2+)</name>
        <dbReference type="ChEBI" id="CHEBI:29108"/>
        <label>2</label>
        <note>high affinity</note>
    </ligand>
</feature>
<feature type="binding site" evidence="4">
    <location>
        <position position="74"/>
    </location>
    <ligand>
        <name>Ca(2+)</name>
        <dbReference type="ChEBI" id="CHEBI:29108"/>
        <label>2</label>
        <note>high affinity</note>
    </ligand>
</feature>
<feature type="modified residue" description="S-nitrosocysteine" evidence="2">
    <location>
        <position position="86"/>
    </location>
</feature>
<feature type="sequence conflict" description="In Ref. 1; AA207749." evidence="9" ref="1">
    <original>Q</original>
    <variation>E</variation>
    <location>
        <position position="22"/>
    </location>
</feature>
<feature type="sequence conflict" description="In Ref. 1; AA432539." evidence="9" ref="1">
    <original>Q</original>
    <variation>H</variation>
    <location>
        <position position="22"/>
    </location>
</feature>
<feature type="sequence conflict" description="In Ref. 2; AAC64108." evidence="9" ref="2">
    <original>Q</original>
    <variation>K</variation>
    <location>
        <position position="22"/>
    </location>
</feature>
<feature type="sequence conflict" description="In Ref. 1; AA500563." evidence="9" ref="1">
    <original>Q</original>
    <variation>M</variation>
    <location>
        <position position="22"/>
    </location>
</feature>
<accession>P56565</accession>
<accession>O88949</accession>
<keyword id="KW-0002">3D-structure</keyword>
<keyword id="KW-0106">Calcium</keyword>
<keyword id="KW-0963">Cytoplasm</keyword>
<keyword id="KW-0479">Metal-binding</keyword>
<keyword id="KW-0496">Mitochondrion</keyword>
<keyword id="KW-1185">Reference proteome</keyword>
<keyword id="KW-0677">Repeat</keyword>
<keyword id="KW-0702">S-nitrosylation</keyword>
<keyword id="KW-0703">Sarcoplasmic reticulum</keyword>
<protein>
    <recommendedName>
        <fullName>Protein S100-A1</fullName>
    </recommendedName>
    <alternativeName>
        <fullName>S-100 protein alpha chain</fullName>
    </alternativeName>
    <alternativeName>
        <fullName>S-100 protein subunit alpha</fullName>
    </alternativeName>
    <alternativeName>
        <fullName>S100 calcium-binding protein A1</fullName>
    </alternativeName>
</protein>
<organism>
    <name type="scientific">Mus musculus</name>
    <name type="common">Mouse</name>
    <dbReference type="NCBI Taxonomy" id="10090"/>
    <lineage>
        <taxon>Eukaryota</taxon>
        <taxon>Metazoa</taxon>
        <taxon>Chordata</taxon>
        <taxon>Craniata</taxon>
        <taxon>Vertebrata</taxon>
        <taxon>Euteleostomi</taxon>
        <taxon>Mammalia</taxon>
        <taxon>Eutheria</taxon>
        <taxon>Euarchontoglires</taxon>
        <taxon>Glires</taxon>
        <taxon>Rodentia</taxon>
        <taxon>Myomorpha</taxon>
        <taxon>Muroidea</taxon>
        <taxon>Muridae</taxon>
        <taxon>Murinae</taxon>
        <taxon>Mus</taxon>
        <taxon>Mus</taxon>
    </lineage>
</organism>
<proteinExistence type="evidence at protein level"/>
<name>S10A1_MOUSE</name>